<evidence type="ECO:0000255" key="1">
    <source>
        <dbReference type="HAMAP-Rule" id="MF_01347"/>
    </source>
</evidence>
<organism>
    <name type="scientific">Geobacter metallireducens (strain ATCC 53774 / DSM 7210 / GS-15)</name>
    <dbReference type="NCBI Taxonomy" id="269799"/>
    <lineage>
        <taxon>Bacteria</taxon>
        <taxon>Pseudomonadati</taxon>
        <taxon>Thermodesulfobacteriota</taxon>
        <taxon>Desulfuromonadia</taxon>
        <taxon>Geobacterales</taxon>
        <taxon>Geobacteraceae</taxon>
        <taxon>Geobacter</taxon>
    </lineage>
</organism>
<dbReference type="EC" id="7.1.2.2" evidence="1"/>
<dbReference type="EMBL" id="CP000148">
    <property type="protein sequence ID" value="ABB33618.1"/>
    <property type="molecule type" value="Genomic_DNA"/>
</dbReference>
<dbReference type="RefSeq" id="WP_004514213.1">
    <property type="nucleotide sequence ID" value="NC_007517.1"/>
</dbReference>
<dbReference type="SMR" id="Q39Q56"/>
<dbReference type="STRING" id="269799.Gmet_3406"/>
<dbReference type="KEGG" id="gme:Gmet_3406"/>
<dbReference type="eggNOG" id="COG0055">
    <property type="taxonomic scope" value="Bacteria"/>
</dbReference>
<dbReference type="HOGENOM" id="CLU_022398_0_2_7"/>
<dbReference type="Proteomes" id="UP000007073">
    <property type="component" value="Chromosome"/>
</dbReference>
<dbReference type="GO" id="GO:0005886">
    <property type="term" value="C:plasma membrane"/>
    <property type="evidence" value="ECO:0007669"/>
    <property type="project" value="UniProtKB-SubCell"/>
</dbReference>
<dbReference type="GO" id="GO:0045259">
    <property type="term" value="C:proton-transporting ATP synthase complex"/>
    <property type="evidence" value="ECO:0007669"/>
    <property type="project" value="UniProtKB-KW"/>
</dbReference>
<dbReference type="GO" id="GO:0005524">
    <property type="term" value="F:ATP binding"/>
    <property type="evidence" value="ECO:0007669"/>
    <property type="project" value="UniProtKB-UniRule"/>
</dbReference>
<dbReference type="GO" id="GO:0016887">
    <property type="term" value="F:ATP hydrolysis activity"/>
    <property type="evidence" value="ECO:0007669"/>
    <property type="project" value="InterPro"/>
</dbReference>
<dbReference type="GO" id="GO:0046933">
    <property type="term" value="F:proton-transporting ATP synthase activity, rotational mechanism"/>
    <property type="evidence" value="ECO:0007669"/>
    <property type="project" value="UniProtKB-UniRule"/>
</dbReference>
<dbReference type="CDD" id="cd18110">
    <property type="entry name" value="ATP-synt_F1_beta_C"/>
    <property type="match status" value="1"/>
</dbReference>
<dbReference type="CDD" id="cd18115">
    <property type="entry name" value="ATP-synt_F1_beta_N"/>
    <property type="match status" value="1"/>
</dbReference>
<dbReference type="CDD" id="cd01133">
    <property type="entry name" value="F1-ATPase_beta_CD"/>
    <property type="match status" value="1"/>
</dbReference>
<dbReference type="FunFam" id="1.10.1140.10:FF:000001">
    <property type="entry name" value="ATP synthase subunit beta"/>
    <property type="match status" value="1"/>
</dbReference>
<dbReference type="FunFam" id="2.40.10.170:FF:000005">
    <property type="entry name" value="ATP synthase subunit beta"/>
    <property type="match status" value="1"/>
</dbReference>
<dbReference type="FunFam" id="3.40.50.300:FF:000026">
    <property type="entry name" value="ATP synthase subunit beta"/>
    <property type="match status" value="1"/>
</dbReference>
<dbReference type="Gene3D" id="2.40.10.170">
    <property type="match status" value="1"/>
</dbReference>
<dbReference type="Gene3D" id="1.10.1140.10">
    <property type="entry name" value="Bovine Mitochondrial F1-atpase, Atp Synthase Beta Chain, Chain D, domain 3"/>
    <property type="match status" value="1"/>
</dbReference>
<dbReference type="Gene3D" id="3.40.50.300">
    <property type="entry name" value="P-loop containing nucleotide triphosphate hydrolases"/>
    <property type="match status" value="1"/>
</dbReference>
<dbReference type="HAMAP" id="MF_01347">
    <property type="entry name" value="ATP_synth_beta_bact"/>
    <property type="match status" value="1"/>
</dbReference>
<dbReference type="InterPro" id="IPR003593">
    <property type="entry name" value="AAA+_ATPase"/>
</dbReference>
<dbReference type="InterPro" id="IPR055190">
    <property type="entry name" value="ATP-synt_VA_C"/>
</dbReference>
<dbReference type="InterPro" id="IPR005722">
    <property type="entry name" value="ATP_synth_F1_bsu"/>
</dbReference>
<dbReference type="InterPro" id="IPR020003">
    <property type="entry name" value="ATPase_a/bsu_AS"/>
</dbReference>
<dbReference type="InterPro" id="IPR050053">
    <property type="entry name" value="ATPase_alpha/beta_chains"/>
</dbReference>
<dbReference type="InterPro" id="IPR004100">
    <property type="entry name" value="ATPase_F1/V1/A1_a/bsu_N"/>
</dbReference>
<dbReference type="InterPro" id="IPR036121">
    <property type="entry name" value="ATPase_F1/V1/A1_a/bsu_N_sf"/>
</dbReference>
<dbReference type="InterPro" id="IPR000194">
    <property type="entry name" value="ATPase_F1/V1/A1_a/bsu_nucl-bd"/>
</dbReference>
<dbReference type="InterPro" id="IPR024034">
    <property type="entry name" value="ATPase_F1/V1_b/a_C"/>
</dbReference>
<dbReference type="InterPro" id="IPR027417">
    <property type="entry name" value="P-loop_NTPase"/>
</dbReference>
<dbReference type="NCBIfam" id="TIGR01039">
    <property type="entry name" value="atpD"/>
    <property type="match status" value="1"/>
</dbReference>
<dbReference type="PANTHER" id="PTHR15184">
    <property type="entry name" value="ATP SYNTHASE"/>
    <property type="match status" value="1"/>
</dbReference>
<dbReference type="PANTHER" id="PTHR15184:SF71">
    <property type="entry name" value="ATP SYNTHASE SUBUNIT BETA, MITOCHONDRIAL"/>
    <property type="match status" value="1"/>
</dbReference>
<dbReference type="Pfam" id="PF00006">
    <property type="entry name" value="ATP-synt_ab"/>
    <property type="match status" value="1"/>
</dbReference>
<dbReference type="Pfam" id="PF02874">
    <property type="entry name" value="ATP-synt_ab_N"/>
    <property type="match status" value="1"/>
</dbReference>
<dbReference type="Pfam" id="PF22919">
    <property type="entry name" value="ATP-synt_VA_C"/>
    <property type="match status" value="1"/>
</dbReference>
<dbReference type="PIRSF" id="PIRSF039072">
    <property type="entry name" value="ATPase_subunit_beta"/>
    <property type="match status" value="1"/>
</dbReference>
<dbReference type="SMART" id="SM00382">
    <property type="entry name" value="AAA"/>
    <property type="match status" value="1"/>
</dbReference>
<dbReference type="SUPFAM" id="SSF47917">
    <property type="entry name" value="C-terminal domain of alpha and beta subunits of F1 ATP synthase"/>
    <property type="match status" value="1"/>
</dbReference>
<dbReference type="SUPFAM" id="SSF50615">
    <property type="entry name" value="N-terminal domain of alpha and beta subunits of F1 ATP synthase"/>
    <property type="match status" value="1"/>
</dbReference>
<dbReference type="SUPFAM" id="SSF52540">
    <property type="entry name" value="P-loop containing nucleoside triphosphate hydrolases"/>
    <property type="match status" value="1"/>
</dbReference>
<dbReference type="PROSITE" id="PS00152">
    <property type="entry name" value="ATPASE_ALPHA_BETA"/>
    <property type="match status" value="1"/>
</dbReference>
<proteinExistence type="inferred from homology"/>
<comment type="function">
    <text evidence="1">Produces ATP from ADP in the presence of a proton gradient across the membrane. The catalytic sites are hosted primarily by the beta subunits.</text>
</comment>
<comment type="catalytic activity">
    <reaction evidence="1">
        <text>ATP + H2O + 4 H(+)(in) = ADP + phosphate + 5 H(+)(out)</text>
        <dbReference type="Rhea" id="RHEA:57720"/>
        <dbReference type="ChEBI" id="CHEBI:15377"/>
        <dbReference type="ChEBI" id="CHEBI:15378"/>
        <dbReference type="ChEBI" id="CHEBI:30616"/>
        <dbReference type="ChEBI" id="CHEBI:43474"/>
        <dbReference type="ChEBI" id="CHEBI:456216"/>
        <dbReference type="EC" id="7.1.2.2"/>
    </reaction>
</comment>
<comment type="subunit">
    <text evidence="1">F-type ATPases have 2 components, CF(1) - the catalytic core - and CF(0) - the membrane proton channel. CF(1) has five subunits: alpha(3), beta(3), gamma(1), delta(1), epsilon(1). CF(0) has three main subunits: a(1), b(2) and c(9-12). The alpha and beta chains form an alternating ring which encloses part of the gamma chain. CF(1) is attached to CF(0) by a central stalk formed by the gamma and epsilon chains, while a peripheral stalk is formed by the delta and b chains.</text>
</comment>
<comment type="subcellular location">
    <subcellularLocation>
        <location evidence="1">Cell inner membrane</location>
        <topology evidence="1">Peripheral membrane protein</topology>
    </subcellularLocation>
</comment>
<comment type="similarity">
    <text evidence="1">Belongs to the ATPase alpha/beta chains family.</text>
</comment>
<accession>Q39Q56</accession>
<gene>
    <name evidence="1" type="primary">atpD</name>
    <name type="ordered locus">Gmet_3406</name>
</gene>
<keyword id="KW-0066">ATP synthesis</keyword>
<keyword id="KW-0067">ATP-binding</keyword>
<keyword id="KW-0997">Cell inner membrane</keyword>
<keyword id="KW-1003">Cell membrane</keyword>
<keyword id="KW-0139">CF(1)</keyword>
<keyword id="KW-0375">Hydrogen ion transport</keyword>
<keyword id="KW-0406">Ion transport</keyword>
<keyword id="KW-0472">Membrane</keyword>
<keyword id="KW-0547">Nucleotide-binding</keyword>
<keyword id="KW-1185">Reference proteome</keyword>
<keyword id="KW-1278">Translocase</keyword>
<keyword id="KW-0813">Transport</keyword>
<name>ATPB_GEOMG</name>
<protein>
    <recommendedName>
        <fullName evidence="1">ATP synthase subunit beta</fullName>
        <ecNumber evidence="1">7.1.2.2</ecNumber>
    </recommendedName>
    <alternativeName>
        <fullName evidence="1">ATP synthase F1 sector subunit beta</fullName>
    </alternativeName>
    <alternativeName>
        <fullName evidence="1">F-ATPase subunit beta</fullName>
    </alternativeName>
</protein>
<sequence length="470" mass="51033">MSQNFGRISQVIGAVIDVEFEPGKLPPIYNALRVTNPAIDDKEYNLVLEVAQHLGENSVRTIAMDSTDGLVRGQAALDTGKQISVPVGRKTLGRILNVIGEPVDEMGPVNAEKEYGIHRESPSFVDQSTKVEAFTTGIKVVDLLAPYARGGKIGLFGGAGVGKTVLIMELINNIAKQHGGFSVFAGVGERTREGNDLWMEMKESGVLDKAALVYGQMNEPPGARARVALSALSIAEYFRDEEGQNVLLFIDNIFRFTQAGSEVSALLGRIPSAVGYQPTLATEMGELQERITSTTKGSITSVQAIYVPADDLTDPAPATAFAHLDATTVLSRQIAELGIYPAVDPLDSTSRILDPQVIGEEHYAIARQVQYVLQKYKDLQDIIAILGMDELSEEDKLVVARARKIQRFLSQPFHVAEAFTGSPGKYVELKDTIKGFQEIVAGKHDDIPEQAFYMVGTIEEALEKAKKLAA</sequence>
<feature type="chain" id="PRO_0000254268" description="ATP synthase subunit beta">
    <location>
        <begin position="1"/>
        <end position="470"/>
    </location>
</feature>
<feature type="binding site" evidence="1">
    <location>
        <begin position="157"/>
        <end position="164"/>
    </location>
    <ligand>
        <name>ATP</name>
        <dbReference type="ChEBI" id="CHEBI:30616"/>
    </ligand>
</feature>
<reference key="1">
    <citation type="journal article" date="2009" name="BMC Microbiol.">
        <title>The genome sequence of Geobacter metallireducens: features of metabolism, physiology and regulation common and dissimilar to Geobacter sulfurreducens.</title>
        <authorList>
            <person name="Aklujkar M."/>
            <person name="Krushkal J."/>
            <person name="DiBartolo G."/>
            <person name="Lapidus A."/>
            <person name="Land M.L."/>
            <person name="Lovley D.R."/>
        </authorList>
    </citation>
    <scope>NUCLEOTIDE SEQUENCE [LARGE SCALE GENOMIC DNA]</scope>
    <source>
        <strain>ATCC 53774 / DSM 7210 / GS-15</strain>
    </source>
</reference>